<evidence type="ECO:0000255" key="1"/>
<evidence type="ECO:0000269" key="2">
    <source>
    </source>
</evidence>
<evidence type="ECO:0000305" key="3"/>
<reference key="1">
    <citation type="journal article" date="2002" name="Nature">
        <title>The genome sequence of Schizosaccharomyces pombe.</title>
        <authorList>
            <person name="Wood V."/>
            <person name="Gwilliam R."/>
            <person name="Rajandream M.A."/>
            <person name="Lyne M.H."/>
            <person name="Lyne R."/>
            <person name="Stewart A."/>
            <person name="Sgouros J.G."/>
            <person name="Peat N."/>
            <person name="Hayles J."/>
            <person name="Baker S.G."/>
            <person name="Basham D."/>
            <person name="Bowman S."/>
            <person name="Brooks K."/>
            <person name="Brown D."/>
            <person name="Brown S."/>
            <person name="Chillingworth T."/>
            <person name="Churcher C.M."/>
            <person name="Collins M."/>
            <person name="Connor R."/>
            <person name="Cronin A."/>
            <person name="Davis P."/>
            <person name="Feltwell T."/>
            <person name="Fraser A."/>
            <person name="Gentles S."/>
            <person name="Goble A."/>
            <person name="Hamlin N."/>
            <person name="Harris D.E."/>
            <person name="Hidalgo J."/>
            <person name="Hodgson G."/>
            <person name="Holroyd S."/>
            <person name="Hornsby T."/>
            <person name="Howarth S."/>
            <person name="Huckle E.J."/>
            <person name="Hunt S."/>
            <person name="Jagels K."/>
            <person name="James K.D."/>
            <person name="Jones L."/>
            <person name="Jones M."/>
            <person name="Leather S."/>
            <person name="McDonald S."/>
            <person name="McLean J."/>
            <person name="Mooney P."/>
            <person name="Moule S."/>
            <person name="Mungall K.L."/>
            <person name="Murphy L.D."/>
            <person name="Niblett D."/>
            <person name="Odell C."/>
            <person name="Oliver K."/>
            <person name="O'Neil S."/>
            <person name="Pearson D."/>
            <person name="Quail M.A."/>
            <person name="Rabbinowitsch E."/>
            <person name="Rutherford K.M."/>
            <person name="Rutter S."/>
            <person name="Saunders D."/>
            <person name="Seeger K."/>
            <person name="Sharp S."/>
            <person name="Skelton J."/>
            <person name="Simmonds M.N."/>
            <person name="Squares R."/>
            <person name="Squares S."/>
            <person name="Stevens K."/>
            <person name="Taylor K."/>
            <person name="Taylor R.G."/>
            <person name="Tivey A."/>
            <person name="Walsh S.V."/>
            <person name="Warren T."/>
            <person name="Whitehead S."/>
            <person name="Woodward J.R."/>
            <person name="Volckaert G."/>
            <person name="Aert R."/>
            <person name="Robben J."/>
            <person name="Grymonprez B."/>
            <person name="Weltjens I."/>
            <person name="Vanstreels E."/>
            <person name="Rieger M."/>
            <person name="Schaefer M."/>
            <person name="Mueller-Auer S."/>
            <person name="Gabel C."/>
            <person name="Fuchs M."/>
            <person name="Duesterhoeft A."/>
            <person name="Fritzc C."/>
            <person name="Holzer E."/>
            <person name="Moestl D."/>
            <person name="Hilbert H."/>
            <person name="Borzym K."/>
            <person name="Langer I."/>
            <person name="Beck A."/>
            <person name="Lehrach H."/>
            <person name="Reinhardt R."/>
            <person name="Pohl T.M."/>
            <person name="Eger P."/>
            <person name="Zimmermann W."/>
            <person name="Wedler H."/>
            <person name="Wambutt R."/>
            <person name="Purnelle B."/>
            <person name="Goffeau A."/>
            <person name="Cadieu E."/>
            <person name="Dreano S."/>
            <person name="Gloux S."/>
            <person name="Lelaure V."/>
            <person name="Mottier S."/>
            <person name="Galibert F."/>
            <person name="Aves S.J."/>
            <person name="Xiang Z."/>
            <person name="Hunt C."/>
            <person name="Moore K."/>
            <person name="Hurst S.M."/>
            <person name="Lucas M."/>
            <person name="Rochet M."/>
            <person name="Gaillardin C."/>
            <person name="Tallada V.A."/>
            <person name="Garzon A."/>
            <person name="Thode G."/>
            <person name="Daga R.R."/>
            <person name="Cruzado L."/>
            <person name="Jimenez J."/>
            <person name="Sanchez M."/>
            <person name="del Rey F."/>
            <person name="Benito J."/>
            <person name="Dominguez A."/>
            <person name="Revuelta J.L."/>
            <person name="Moreno S."/>
            <person name="Armstrong J."/>
            <person name="Forsburg S.L."/>
            <person name="Cerutti L."/>
            <person name="Lowe T."/>
            <person name="McCombie W.R."/>
            <person name="Paulsen I."/>
            <person name="Potashkin J."/>
            <person name="Shpakovski G.V."/>
            <person name="Ussery D."/>
            <person name="Barrell B.G."/>
            <person name="Nurse P."/>
        </authorList>
    </citation>
    <scope>NUCLEOTIDE SEQUENCE [LARGE SCALE GENOMIC DNA]</scope>
    <source>
        <strain>972 / ATCC 24843</strain>
    </source>
</reference>
<reference key="2">
    <citation type="journal article" date="2006" name="Nat. Biotechnol.">
        <title>ORFeome cloning and global analysis of protein localization in the fission yeast Schizosaccharomyces pombe.</title>
        <authorList>
            <person name="Matsuyama A."/>
            <person name="Arai R."/>
            <person name="Yashiroda Y."/>
            <person name="Shirai A."/>
            <person name="Kamata A."/>
            <person name="Sekido S."/>
            <person name="Kobayashi Y."/>
            <person name="Hashimoto A."/>
            <person name="Hamamoto M."/>
            <person name="Hiraoka Y."/>
            <person name="Horinouchi S."/>
            <person name="Yoshida M."/>
        </authorList>
    </citation>
    <scope>SUBCELLULAR LOCATION [LARGE SCALE ANALYSIS]</scope>
</reference>
<feature type="chain" id="PRO_0000372632" description="Uncharacterized protein C338.12">
    <location>
        <begin position="1"/>
        <end position="77"/>
    </location>
</feature>
<feature type="domain" description="Inhibitor I9" evidence="1">
    <location>
        <begin position="5"/>
        <end position="74"/>
    </location>
</feature>
<keyword id="KW-0963">Cytoplasm</keyword>
<keyword id="KW-0539">Nucleus</keyword>
<keyword id="KW-1185">Reference proteome</keyword>
<gene>
    <name type="ORF">SPCC338.12</name>
</gene>
<protein>
    <recommendedName>
        <fullName>Uncharacterized protein C338.12</fullName>
    </recommendedName>
</protein>
<dbReference type="EMBL" id="CU329672">
    <property type="protein sequence ID" value="CAA19343.1"/>
    <property type="molecule type" value="Genomic_DNA"/>
</dbReference>
<dbReference type="PIR" id="T41731">
    <property type="entry name" value="T41731"/>
</dbReference>
<dbReference type="SMR" id="O74989"/>
<dbReference type="BioGRID" id="275591">
    <property type="interactions" value="1"/>
</dbReference>
<dbReference type="STRING" id="284812.O74989"/>
<dbReference type="iPTMnet" id="O74989"/>
<dbReference type="PaxDb" id="4896-SPCC338.12.1"/>
<dbReference type="EnsemblFungi" id="SPCC338.12.1">
    <property type="protein sequence ID" value="SPCC338.12.1:pep"/>
    <property type="gene ID" value="SPCC338.12"/>
</dbReference>
<dbReference type="KEGG" id="spo:2539018"/>
<dbReference type="PomBase" id="SPCC338.12"/>
<dbReference type="VEuPathDB" id="FungiDB:SPCC338.12"/>
<dbReference type="HOGENOM" id="CLU_156026_3_0_1"/>
<dbReference type="InParanoid" id="O74989"/>
<dbReference type="OMA" id="EKSYIVQ"/>
<dbReference type="PRO" id="PR:O74989"/>
<dbReference type="Proteomes" id="UP000002485">
    <property type="component" value="Chromosome III"/>
</dbReference>
<dbReference type="GO" id="GO:0005829">
    <property type="term" value="C:cytosol"/>
    <property type="evidence" value="ECO:0007005"/>
    <property type="project" value="PomBase"/>
</dbReference>
<dbReference type="GO" id="GO:0000324">
    <property type="term" value="C:fungal-type vacuole"/>
    <property type="evidence" value="ECO:0000266"/>
    <property type="project" value="PomBase"/>
</dbReference>
<dbReference type="GO" id="GO:0005634">
    <property type="term" value="C:nucleus"/>
    <property type="evidence" value="ECO:0007005"/>
    <property type="project" value="PomBase"/>
</dbReference>
<dbReference type="GO" id="GO:0004866">
    <property type="term" value="F:endopeptidase inhibitor activity"/>
    <property type="evidence" value="ECO:0000314"/>
    <property type="project" value="PomBase"/>
</dbReference>
<dbReference type="GO" id="GO:0007039">
    <property type="term" value="P:protein catabolic process in the vacuole"/>
    <property type="evidence" value="ECO:0000303"/>
    <property type="project" value="PomBase"/>
</dbReference>
<dbReference type="GO" id="GO:0042144">
    <property type="term" value="P:vacuole fusion, non-autophagic"/>
    <property type="evidence" value="ECO:0000318"/>
    <property type="project" value="GO_Central"/>
</dbReference>
<dbReference type="FunFam" id="3.30.70.80:FF:000005">
    <property type="entry name" value="Proteinase inhibitor I2B"/>
    <property type="match status" value="1"/>
</dbReference>
<dbReference type="Gene3D" id="3.30.70.80">
    <property type="entry name" value="Peptidase S8 propeptide/proteinase inhibitor I9"/>
    <property type="match status" value="1"/>
</dbReference>
<dbReference type="InterPro" id="IPR052471">
    <property type="entry name" value="PBI_I9"/>
</dbReference>
<dbReference type="InterPro" id="IPR010259">
    <property type="entry name" value="S8pro/Inhibitor_I9"/>
</dbReference>
<dbReference type="InterPro" id="IPR037045">
    <property type="entry name" value="S8pro/Inhibitor_I9_sf"/>
</dbReference>
<dbReference type="PANTHER" id="PTHR28288">
    <property type="entry name" value="PROTEASE B INHIBITOR 2"/>
    <property type="match status" value="1"/>
</dbReference>
<dbReference type="PANTHER" id="PTHR28288:SF2">
    <property type="entry name" value="PROTEASE B INHIBITOR 2"/>
    <property type="match status" value="1"/>
</dbReference>
<dbReference type="Pfam" id="PF05922">
    <property type="entry name" value="Inhibitor_I9"/>
    <property type="match status" value="1"/>
</dbReference>
<dbReference type="SUPFAM" id="SSF54897">
    <property type="entry name" value="Protease propeptides/inhibitors"/>
    <property type="match status" value="1"/>
</dbReference>
<name>YJZC_SCHPO</name>
<accession>O74989</accession>
<organism>
    <name type="scientific">Schizosaccharomyces pombe (strain 972 / ATCC 24843)</name>
    <name type="common">Fission yeast</name>
    <dbReference type="NCBI Taxonomy" id="284812"/>
    <lineage>
        <taxon>Eukaryota</taxon>
        <taxon>Fungi</taxon>
        <taxon>Dikarya</taxon>
        <taxon>Ascomycota</taxon>
        <taxon>Taphrinomycotina</taxon>
        <taxon>Schizosaccharomycetes</taxon>
        <taxon>Schizosaccharomycetales</taxon>
        <taxon>Schizosaccharomycetaceae</taxon>
        <taxon>Schizosaccharomyces</taxon>
    </lineage>
</organism>
<sequence length="77" mass="8552">MSQKSYIVQLKDSVDPASMDKIKSDLEASGAKIGHTYDTVFKGFSVSLPENAVDALSAHPEIQHFEPDQEMHTMKKD</sequence>
<proteinExistence type="inferred from homology"/>
<comment type="subcellular location">
    <subcellularLocation>
        <location evidence="2">Cytoplasm</location>
    </subcellularLocation>
    <subcellularLocation>
        <location evidence="2">Nucleus</location>
    </subcellularLocation>
</comment>
<comment type="similarity">
    <text evidence="3">Belongs to the protease inhibitor I9 family.</text>
</comment>